<comment type="function">
    <text evidence="2 12 13 15 17 18 19 21 22 23 24 30 31 34 36 40 42 46 48 49 50">Phosphatidylinositol (PtdIns) phosphatase that specifically hydrolyzes the 5-phosphate of phosphatidylinositol-3,4,5-trisphosphate (PtdIns(3,4,5)P3) to produce PtdIns(3,4)P2, thereby negatively regulating the PI3K (phosphoinositide 3-kinase) pathways (By similarity). Also able to hydrolyze the 5-phosphate of phosphatidylinositol-4,5-bisphosphate (PtdIns(4,5)P3) and inositol 1,3,4,5-tetrakisphosphate (PubMed:9367159). Acts as a negative regulator of B-cell antigen receptor signaling. Mediates signaling from the FC-gamma-RIIB receptor (FCGR2B), playing a central role in terminating signal transduction from activating immune/hematopoietic cell receptor systems. Acts as a negative regulator of myeloid cell proliferation/survival and chemotaxis, mast cell degranulation, immune cells homeostasis, integrin alpha-IIb/beta-3 signaling in platelets and JNK signaling in B-cells. Regulates proliferation of osteoclast precursors, macrophage programming, phagocytosis and activation and is required for endotoxin tolerance. Involved in the control of cell-cell junctions, CD32a signaling in neutrophils and modulation of EGF-induced phospholipase C activity. Key regulator of neutrophil migration, by governing the formation of the leading edge and polarization required for chemotaxis. Modulates FCGR3/CD16-mediated cytotoxicity in NK cells. Mediates the activin/TGF-beta-induced apoptosis through its Smad-dependent expression.</text>
</comment>
<comment type="catalytic activity">
    <reaction evidence="33 34 41">
        <text>a 1,2-diacyl-sn-glycero-3-phospho-(1D-myo-inositol-3,4,5-trisphosphate) + H2O = a 1,2-diacyl-sn-glycero-3-phospho-(1D-myo-inositol-3,4-bisphosphate) + phosphate</text>
        <dbReference type="Rhea" id="RHEA:25528"/>
        <dbReference type="ChEBI" id="CHEBI:15377"/>
        <dbReference type="ChEBI" id="CHEBI:43474"/>
        <dbReference type="ChEBI" id="CHEBI:57658"/>
        <dbReference type="ChEBI" id="CHEBI:57836"/>
        <dbReference type="EC" id="3.1.3.86"/>
    </reaction>
</comment>
<comment type="catalytic activity">
    <reaction evidence="42">
        <text>a 1,2-diacyl-sn-glycero-3-phospho-(1D-myo-inositol-4,5-bisphosphate) + H2O = a 1,2-diacyl-sn-glycero-3-phospho-(1D-myo-inositol 4-phosphate) + phosphate</text>
        <dbReference type="Rhea" id="RHEA:22764"/>
        <dbReference type="ChEBI" id="CHEBI:15377"/>
        <dbReference type="ChEBI" id="CHEBI:43474"/>
        <dbReference type="ChEBI" id="CHEBI:58178"/>
        <dbReference type="ChEBI" id="CHEBI:58456"/>
        <dbReference type="EC" id="3.1.3.36"/>
    </reaction>
</comment>
<comment type="catalytic activity">
    <reaction evidence="2">
        <text>1D-myo-inositol 1,3,4,5-tetrakisphosphate + H2O = 1D-myo-inositol 1,3,4-trisphosphate + phosphate</text>
        <dbReference type="Rhea" id="RHEA:11392"/>
        <dbReference type="ChEBI" id="CHEBI:15377"/>
        <dbReference type="ChEBI" id="CHEBI:43474"/>
        <dbReference type="ChEBI" id="CHEBI:57895"/>
        <dbReference type="ChEBI" id="CHEBI:58414"/>
        <dbReference type="EC" id="3.1.3.56"/>
    </reaction>
</comment>
<comment type="activity regulation">
    <text>Activated upon translocation to the sites of synthesis of PtdIns(3,4,5)P3 in the membrane.</text>
</comment>
<comment type="subunit">
    <text evidence="1 2 5 6 7 8 9 10 11 14 17 19 20 23 25 26 27 29 32 33 34 37 38 39 43 44">Interacts with tyrosine phosphorylated form of SHC1 (PubMed:10068665, PubMed:10395202, PubMed:8643691, PubMed:8654924, PubMed:9083021, PubMed:9099679). Interacts with tyrosine phosphorylated form of DOK1 (PubMed:11031258). Interacts with tyrosine phosphorylated form of DOK3 (PubMed:14993273). Interacts with tyrosine phosphorylated form of SLAMF1/CD150 (By similarity). Interacts with PTPN11/SHP-2 in response to IL-3 (PubMed:9110989, PubMed:9393882). Interacts with receptor EPOR (PubMed:10660611). Interacts with receptors MS4A2/FCER1B and FCER1G (By similarity). Interacts with receptors FCGR2B and FCGR3 (PubMed:10395202, PubMed:10779347, PubMed:11016922, PubMed:12393695, PubMed:15456754). Interacts with receptor FCGR2A, leading to regulate gene expression during the phagocytic process (PubMed:12370370). Interacts with GRB2 (PubMed:10068665, PubMed:8643691). Interacts with PLCG1 (PubMed:16000869). Interacts with tyrosine kinases SRC and TEC (PubMed:10794720, PubMed:15492005). Interacts with CRKL (PubMed:11031258). Interacts with c-Met/MET (PubMed:11896575). Interacts with MILR1 (tyrosine-phosphorylated) (PubMed:20526344). Isoform 5 interacts with IL6ST/gp130 (PubMed:17105399). Can weakly interact (via NPXY motif 2) with DAB2 (via PID domain); the interaction is impaired by tyrosine phosphorylation of the NPXY motif (PubMed:11247302). Interacts (via SH2 domain) with tyrosine phosphorylated KLRC1 (via ITIM). Interacts with MPL/TPOR (By similarity).</text>
</comment>
<comment type="interaction">
    <interactant intactId="EBI-300210">
        <id>Q9ES52</id>
    </interactant>
    <interactant intactId="EBI-617954">
        <id>Q8CIH5</id>
        <label>Plcg2</label>
    </interactant>
    <organismsDiffer>false</organismsDiffer>
    <experiments>3</experiments>
</comment>
<comment type="interaction">
    <interactant intactId="EBI-1452545">
        <id>Q9ES52-1</id>
    </interactant>
    <interactant intactId="EBI-520244">
        <id>P23727</id>
        <label>PIK3R1</label>
    </interactant>
    <organismsDiffer>true</organismsDiffer>
    <experiments>2</experiments>
</comment>
<comment type="subcellular location">
    <subcellularLocation>
        <location evidence="28">Cytoplasm</location>
    </subcellularLocation>
    <subcellularLocation>
        <location evidence="20">Cell membrane</location>
        <topology evidence="59">Peripheral membrane protein</topology>
    </subcellularLocation>
    <subcellularLocation>
        <location evidence="20">Membrane raft</location>
    </subcellularLocation>
    <subcellularLocation>
        <location evidence="47">Cytoplasm</location>
        <location evidence="47">Cytoskeleton</location>
    </subcellularLocation>
    <text evidence="20">Translocates to the plasma membrane when activated, translocation is probably due to different mechanisms depending on the stimulus and cell type (PubMed:12393695). Translocates from the cytoplasm to membrane ruffles in a FCGR3/CD16-dependent manner (PubMed:12393695). Colocalizes with FC-gamma-RIIB receptor (FCGR2B) or FCGR3/CD16 at membrane ruffles (PubMed:12393695). Tyrosine phosphorylation may also participate in membrane localization (PubMed:12393695).</text>
</comment>
<comment type="subcellular location">
    <molecule>Isoform 5</molecule>
    <subcellularLocation>
        <location evidence="16">Cell membrane</location>
        <topology evidence="58">Peripheral membrane protein</topology>
    </subcellularLocation>
    <text evidence="16">Constitutively present at the cell membrane (PubMed:11567986).</text>
</comment>
<comment type="alternative products">
    <event type="alternative splicing"/>
    <isoform>
        <id>Q9ES52-1</id>
        <name>1</name>
        <sequence type="displayed"/>
    </isoform>
    <isoform>
        <id>Q9ES52-2</id>
        <name>2</name>
        <sequence type="described" ref="VSP_027981"/>
    </isoform>
    <isoform>
        <id>Q9ES52-3</id>
        <name>3</name>
        <name>135 kDa SHIP</name>
        <sequence type="described" ref="VSP_027982"/>
    </isoform>
    <isoform>
        <id>Q9ES52-4</id>
        <name>4</name>
        <name>SHIPdelta</name>
        <sequence type="described" ref="VSP_027981 VSP_027983 VSP_027984"/>
    </isoform>
    <isoform>
        <id>Q9ES52-5</id>
        <name>5</name>
        <name>s-SHIP</name>
        <sequence type="described" ref="VSP_027980"/>
    </isoform>
    <isoform>
        <id>Q9ES52-6</id>
        <name>6</name>
        <name>s-SHIPD183</name>
        <sequence type="described" ref="VSP_027980 VSP_027982"/>
    </isoform>
</comment>
<comment type="tissue specificity">
    <text evidence="5 33 34 45">Specifically expressed in immune and hematopoietic cells. Levels vary considerably within this compartment. Lost during erythropoiesis when erythroid cells become Ter119+. Increases substantially with T-cell maturation and when resting B-cells are activated. Also present in mature granulocytes, monocyte/macrophages, mast cells and platelets. Isoform 5 is the only form expressed in embryonic stem (ES) cells and is coexpressed with other isoforms in hematopoietic stem cells, and disappears with differentiation.</text>
</comment>
<comment type="developmental stage">
    <text evidence="5 45">Expressed in late primitive-streak stage embryos (7.5 dpc), when hematopoiesis is thought to begin, and the expression is restricted to the hematopoietic lineage in embryo. In adults expression continues to be in the majority of cells from hematopoietic origin, including granulocytes, monocytes and lymphocytes, and is also found in the spermatids of the testis.</text>
</comment>
<comment type="induction">
    <text evidence="21">By activin/TGF-beta (at protein level). Regulated by the Smad pathway. Isoform 3 is expressed during myeloid development.</text>
</comment>
<comment type="domain">
    <text evidence="37">The SH2 domain interacts with tyrosine phosphorylated forms of proteins such as SHC1 or PTPN11/SHP-2. It competes with that of GRB2 for binding to phosphorylated SHC1 to inhibit the Ras pathway. It is also required for tyrosine phosphorylation.</text>
</comment>
<comment type="domain">
    <text evidence="37">The NPXY sequence motif found in many tyrosine-phosphorylated proteins is required for the specific binding of the PID domain.</text>
</comment>
<comment type="PTM">
    <text evidence="5 6 7 19 34 35 38">Tyrosine phosphorylated by the members of the SRC family after exposure to a diverse array of extracellular stimuli such as cytokines, growth factors, antibodies, chemokines, integrin ligands and hypertonic and oxidative stress. Phosphorylated upon IgG receptor FCGR2B-binding.</text>
</comment>
<comment type="disruption phenotype">
    <text evidence="18 46 50">Mice are viable and fertile. They however fail to thrive and only 40% survive by 14 weeks of age. Mortality is associated with extensive consolidation of the lungs resulting from infiltration by myeloid cells. Increased numbers of granulocyte-macrophage progenitors are observed in both the bone marrow and spleen. Absence of Inpp5d leads to steel factor-induced degranulation of mast cells. They also display increased numbers of osteoclast precursors leading to a severe osteoporosis.</text>
</comment>
<comment type="miscellaneous">
    <molecule>Isoform 4</molecule>
    <text evidence="57">May be produced at very low levels due to a premature stop codon in the mRNA, leading to nonsense-mediated mRNA decay.</text>
</comment>
<comment type="similarity">
    <text evidence="57">Belongs to the inositol 1,4,5-trisphosphate 5-phosphatase family.</text>
</comment>
<keyword id="KW-0002">3D-structure</keyword>
<keyword id="KW-0025">Alternative splicing</keyword>
<keyword id="KW-0053">Apoptosis</keyword>
<keyword id="KW-1003">Cell membrane</keyword>
<keyword id="KW-0963">Cytoplasm</keyword>
<keyword id="KW-0206">Cytoskeleton</keyword>
<keyword id="KW-0903">Direct protein sequencing</keyword>
<keyword id="KW-0378">Hydrolase</keyword>
<keyword id="KW-0391">Immunity</keyword>
<keyword id="KW-0443">Lipid metabolism</keyword>
<keyword id="KW-0472">Membrane</keyword>
<keyword id="KW-0597">Phosphoprotein</keyword>
<keyword id="KW-1185">Reference proteome</keyword>
<keyword id="KW-0677">Repeat</keyword>
<keyword id="KW-0727">SH2 domain</keyword>
<keyword id="KW-0729">SH3-binding</keyword>
<gene>
    <name type="primary">Inpp5d</name>
    <name type="synonym">7a33</name>
    <name type="synonym">Ship</name>
    <name type="synonym">Ship1</name>
</gene>
<organism>
    <name type="scientific">Mus musculus</name>
    <name type="common">Mouse</name>
    <dbReference type="NCBI Taxonomy" id="10090"/>
    <lineage>
        <taxon>Eukaryota</taxon>
        <taxon>Metazoa</taxon>
        <taxon>Chordata</taxon>
        <taxon>Craniata</taxon>
        <taxon>Vertebrata</taxon>
        <taxon>Euteleostomi</taxon>
        <taxon>Mammalia</taxon>
        <taxon>Eutheria</taxon>
        <taxon>Euarchontoglires</taxon>
        <taxon>Glires</taxon>
        <taxon>Rodentia</taxon>
        <taxon>Myomorpha</taxon>
        <taxon>Muroidea</taxon>
        <taxon>Muridae</taxon>
        <taxon>Murinae</taxon>
        <taxon>Mus</taxon>
        <taxon>Mus</taxon>
    </lineage>
</organism>
<sequence length="1191" mass="133542">MPAMVPGWNHGNITRSKAEELLSRAGKDGSFLVRASESIPRAYALCVLFRNCVYTYRILPNEDDKFTVQASEGVPMRFFTKLDQLIDFYKKENMGLVTHLQYPVPLEEEDAIDEAEEDTVESVMSPPELPPRNIPMSAGPSEAKDLPLATENPRAPEVTRLSLSETLFQRLQSMDTSGLPEEHLKAIQDYLSTQLLLDSDFLKTGSSNLPHLKKLMSLLCKELHGEVIRTLPSLESLQRLFDQQLSPGLRPRPQVPGEASPITMVAKLSQLTSLLSSIEDKVKSLLHEGSESTNRRSLIPPVTFEVKSESLGIPQKMHLKVDVESGKLIVKKSKDGSEDKFYSHKKILQLIKSQKFLNKLVILVETEKEKILRKEYVFADSKKREGFCQLLQQMKNKHSEQPEPDMITIFIGTWNMGNAPPPKKITSWFLSKGQGKTRDDSADYIPHDIYVIGTQEDPLGEKEWLELLRHSLQEVTSMTFKTVAIHTLWNIRIVVLAKPEHENRISHICTDNVKTGIANTLGNKGAVGVSFMFNGTSLGFVNSHLTSGSEKKLRRNQNYMNILRFLALGDKKLSPFNITHRFTHLFWLGDLNYRVELPTWEAEAIIQKIKQQQYSDLLAHDQLLLERKDQKVFLHFEEEEITFAPTYRFERLTRDKYAYTKQKATGMKYNLPSWCDRVLWKSYPLVHVVCQSYGSTSDIMTSDHSPVFATFEAGVTSQFVSKNGPGTVDSQGQIEFLACYATLKTKSQTKFYLEFHSSCLESFVKSQEGENEEGSEGELVVRFGETLPKLKPIISDPEYLLDQHILISIKSSDSDESYGEGCIALRLETTEAQHPIYTPLTHHGEMTGHFRGEIKLQTSQGKMREKLYDFVKTERDESSGMKCLKNLTSHDPMRQWEPSGRVPACGVSSLNEMINPNYIGMGPFGQPLHGKSTLSPDQQLTAWSYDQLPKDSSLGPGRGEGPPTPPSQPPLSPKKFSSSTANRGPCPRVQEARPGDLGKVEALLQEDLLLTKPEMFENPLYGSVSSFPKLVPRKEQESPKMLRKEPPPCPDPGISSPSIVLPKAQEVESVKGTSKQAPVPVLGPTPRIRSFTCSSSAEGRMTSGDKSQGKPKASASSQAPVPVKRPVKPSRSEMSQQTTPIPAPRPPLPVKSPAVLQLQHSKGRDYRDNTELPHHGKHRQEEGLLGRTAMQ</sequence>
<name>SHIP1_MOUSE</name>
<accession>Q9ES52</accession>
<accession>Q3UPF9</accession>
<accession>Q4U212</accession>
<accession>Q61034</accession>
<accession>Q61173</accession>
<accession>Q61181</accession>
<accession>Q9JKR7</accession>
<accession>Q9JLF9</accession>
<accession>Q9JLG0</accession>
<accession>Q9QVN8</accession>
<accession>Q9WUC2</accession>
<proteinExistence type="evidence at protein level"/>
<reference key="1">
    <citation type="journal article" date="1996" name="Genes Dev.">
        <title>p150Ship, a signal transduction molecule with inositol polyphosphate-5-phosphatase activity.</title>
        <authorList>
            <person name="Lioubin M.N."/>
            <person name="Algate P.A."/>
            <person name="Tsai S."/>
            <person name="Carlberg K."/>
            <person name="Aebersold A."/>
            <person name="Rohrschneider L.R."/>
        </authorList>
    </citation>
    <scope>NUCLEOTIDE SEQUENCE [MRNA] (ISOFORM 2)</scope>
    <scope>PROTEIN SEQUENCE OF 2-9 AND 1163-1173</scope>
    <scope>FUNCTION</scope>
    <scope>ENZYME ACTIVITY</scope>
    <scope>PHOSPHORYLATION</scope>
    <scope>TISSUE SPECIFICITY</scope>
    <scope>INTERACTION WITH SHC1</scope>
    <source>
        <strain>DBA/2J</strain>
    </source>
</reference>
<reference key="2">
    <citation type="journal article" date="1996" name="Proc. Natl. Acad. Sci. U.S.A.">
        <title>The 145-kDa protein induced to associate with Shc by multiple cytokines is an inositol tetraphosphate and phosphatidylinositol 3,4,5-triphosphate 5-phosphatase.</title>
        <authorList>
            <person name="Damen J.E."/>
            <person name="Liu L."/>
            <person name="Rosten P."/>
            <person name="Humphries R.K."/>
            <person name="Jefferson A.B."/>
            <person name="Majerus P.W."/>
            <person name="Krystal G."/>
        </authorList>
    </citation>
    <scope>NUCLEOTIDE SEQUENCE [MRNA] (ISOFORM 2)</scope>
    <scope>PROTEIN SEQUENCE OF 902-916</scope>
    <scope>ENZYME ACTIVITY</scope>
    <scope>TISSUE SPECIFICITY</scope>
    <scope>INTERACTION WITH GRB2 AND SHC1</scope>
</reference>
<reference key="3">
    <citation type="journal article" date="1997" name="Genomics">
        <title>Molecular cloning and chromosomal localization in human and mouse of the SH2-containing inositol phosphatase, INPP5D (SHIP).</title>
        <authorList>
            <person name="Liu Q."/>
            <person name="Dumont D.J."/>
        </authorList>
    </citation>
    <scope>NUCLEOTIDE SEQUENCE [MRNA] (ISOFORM 1)</scope>
</reference>
<reference key="4">
    <citation type="journal article" date="1999" name="Blood">
        <title>A novel spliced form of SH2-containing inositol phosphatase is expressed during myeloid development.</title>
        <authorList>
            <person name="Lucas D.M."/>
            <person name="Rohrschneider L.R."/>
        </authorList>
    </citation>
    <scope>NUCLEOTIDE SEQUENCE [MRNA] (ISOFORM 3)</scope>
    <scope>PHOSPHORYLATION</scope>
    <scope>INTERACTION WITH SHC1 AND GRB2</scope>
    <scope>TISSUE SPECIFICITY</scope>
    <scope>DEVELOPMENTAL STAGE</scope>
    <source>
        <strain>BALB/cJ</strain>
    </source>
</reference>
<reference key="5">
    <citation type="journal article" date="2000" name="Genomics">
        <title>Cloning of the genomic locus of mouse SH2 containing inositol 5-phosphatase (SHIP) and a novel 110-kDa splice isoform, SHIPdelta.</title>
        <authorList>
            <person name="Wolf I."/>
            <person name="Lucas D.M."/>
            <person name="Algate P.A."/>
            <person name="Rohrschneider L.R."/>
        </authorList>
    </citation>
    <scope>NUCLEOTIDE SEQUENCE [GENOMIC DNA / MRNA] (ISOFORM 4)</scope>
    <source>
        <strain>129/Sv</strain>
    </source>
</reference>
<reference key="6">
    <citation type="journal article" date="2001" name="Blood">
        <title>Embryonic and hematopoietic stem cells express a novel SH2-containing inositol 5'-phosphatase isoform that partners with the Grb2 adapter protein.</title>
        <authorList>
            <person name="Tu Z."/>
            <person name="Ninos J.M."/>
            <person name="Ma Z."/>
            <person name="Wang J.-W."/>
            <person name="Lemos M.P."/>
            <person name="Desponts C."/>
            <person name="Ghansah T."/>
            <person name="Howson J.M."/>
            <person name="Kerr W.G."/>
        </authorList>
    </citation>
    <scope>NUCLEOTIDE SEQUENCE [MRNA] (ISOFORM 5)</scope>
    <scope>SUBCELLULAR LOCATION (ISOFORM 5)</scope>
</reference>
<reference key="7">
    <citation type="journal article" date="2005" name="Science">
        <title>The transcriptional landscape of the mammalian genome.</title>
        <authorList>
            <person name="Carninci P."/>
            <person name="Kasukawa T."/>
            <person name="Katayama S."/>
            <person name="Gough J."/>
            <person name="Frith M.C."/>
            <person name="Maeda N."/>
            <person name="Oyama R."/>
            <person name="Ravasi T."/>
            <person name="Lenhard B."/>
            <person name="Wells C."/>
            <person name="Kodzius R."/>
            <person name="Shimokawa K."/>
            <person name="Bajic V.B."/>
            <person name="Brenner S.E."/>
            <person name="Batalov S."/>
            <person name="Forrest A.R."/>
            <person name="Zavolan M."/>
            <person name="Davis M.J."/>
            <person name="Wilming L.G."/>
            <person name="Aidinis V."/>
            <person name="Allen J.E."/>
            <person name="Ambesi-Impiombato A."/>
            <person name="Apweiler R."/>
            <person name="Aturaliya R.N."/>
            <person name="Bailey T.L."/>
            <person name="Bansal M."/>
            <person name="Baxter L."/>
            <person name="Beisel K.W."/>
            <person name="Bersano T."/>
            <person name="Bono H."/>
            <person name="Chalk A.M."/>
            <person name="Chiu K.P."/>
            <person name="Choudhary V."/>
            <person name="Christoffels A."/>
            <person name="Clutterbuck D.R."/>
            <person name="Crowe M.L."/>
            <person name="Dalla E."/>
            <person name="Dalrymple B.P."/>
            <person name="de Bono B."/>
            <person name="Della Gatta G."/>
            <person name="di Bernardo D."/>
            <person name="Down T."/>
            <person name="Engstrom P."/>
            <person name="Fagiolini M."/>
            <person name="Faulkner G."/>
            <person name="Fletcher C.F."/>
            <person name="Fukushima T."/>
            <person name="Furuno M."/>
            <person name="Futaki S."/>
            <person name="Gariboldi M."/>
            <person name="Georgii-Hemming P."/>
            <person name="Gingeras T.R."/>
            <person name="Gojobori T."/>
            <person name="Green R.E."/>
            <person name="Gustincich S."/>
            <person name="Harbers M."/>
            <person name="Hayashi Y."/>
            <person name="Hensch T.K."/>
            <person name="Hirokawa N."/>
            <person name="Hill D."/>
            <person name="Huminiecki L."/>
            <person name="Iacono M."/>
            <person name="Ikeo K."/>
            <person name="Iwama A."/>
            <person name="Ishikawa T."/>
            <person name="Jakt M."/>
            <person name="Kanapin A."/>
            <person name="Katoh M."/>
            <person name="Kawasawa Y."/>
            <person name="Kelso J."/>
            <person name="Kitamura H."/>
            <person name="Kitano H."/>
            <person name="Kollias G."/>
            <person name="Krishnan S.P."/>
            <person name="Kruger A."/>
            <person name="Kummerfeld S.K."/>
            <person name="Kurochkin I.V."/>
            <person name="Lareau L.F."/>
            <person name="Lazarevic D."/>
            <person name="Lipovich L."/>
            <person name="Liu J."/>
            <person name="Liuni S."/>
            <person name="McWilliam S."/>
            <person name="Madan Babu M."/>
            <person name="Madera M."/>
            <person name="Marchionni L."/>
            <person name="Matsuda H."/>
            <person name="Matsuzawa S."/>
            <person name="Miki H."/>
            <person name="Mignone F."/>
            <person name="Miyake S."/>
            <person name="Morris K."/>
            <person name="Mottagui-Tabar S."/>
            <person name="Mulder N."/>
            <person name="Nakano N."/>
            <person name="Nakauchi H."/>
            <person name="Ng P."/>
            <person name="Nilsson R."/>
            <person name="Nishiguchi S."/>
            <person name="Nishikawa S."/>
            <person name="Nori F."/>
            <person name="Ohara O."/>
            <person name="Okazaki Y."/>
            <person name="Orlando V."/>
            <person name="Pang K.C."/>
            <person name="Pavan W.J."/>
            <person name="Pavesi G."/>
            <person name="Pesole G."/>
            <person name="Petrovsky N."/>
            <person name="Piazza S."/>
            <person name="Reed J."/>
            <person name="Reid J.F."/>
            <person name="Ring B.Z."/>
            <person name="Ringwald M."/>
            <person name="Rost B."/>
            <person name="Ruan Y."/>
            <person name="Salzberg S.L."/>
            <person name="Sandelin A."/>
            <person name="Schneider C."/>
            <person name="Schoenbach C."/>
            <person name="Sekiguchi K."/>
            <person name="Semple C.A."/>
            <person name="Seno S."/>
            <person name="Sessa L."/>
            <person name="Sheng Y."/>
            <person name="Shibata Y."/>
            <person name="Shimada H."/>
            <person name="Shimada K."/>
            <person name="Silva D."/>
            <person name="Sinclair B."/>
            <person name="Sperling S."/>
            <person name="Stupka E."/>
            <person name="Sugiura K."/>
            <person name="Sultana R."/>
            <person name="Takenaka Y."/>
            <person name="Taki K."/>
            <person name="Tammoja K."/>
            <person name="Tan S.L."/>
            <person name="Tang S."/>
            <person name="Taylor M.S."/>
            <person name="Tegner J."/>
            <person name="Teichmann S.A."/>
            <person name="Ueda H.R."/>
            <person name="van Nimwegen E."/>
            <person name="Verardo R."/>
            <person name="Wei C.L."/>
            <person name="Yagi K."/>
            <person name="Yamanishi H."/>
            <person name="Zabarovsky E."/>
            <person name="Zhu S."/>
            <person name="Zimmer A."/>
            <person name="Hide W."/>
            <person name="Bult C."/>
            <person name="Grimmond S.M."/>
            <person name="Teasdale R.D."/>
            <person name="Liu E.T."/>
            <person name="Brusic V."/>
            <person name="Quackenbush J."/>
            <person name="Wahlestedt C."/>
            <person name="Mattick J.S."/>
            <person name="Hume D.A."/>
            <person name="Kai C."/>
            <person name="Sasaki D."/>
            <person name="Tomaru Y."/>
            <person name="Fukuda S."/>
            <person name="Kanamori-Katayama M."/>
            <person name="Suzuki M."/>
            <person name="Aoki J."/>
            <person name="Arakawa T."/>
            <person name="Iida J."/>
            <person name="Imamura K."/>
            <person name="Itoh M."/>
            <person name="Kato T."/>
            <person name="Kawaji H."/>
            <person name="Kawagashira N."/>
            <person name="Kawashima T."/>
            <person name="Kojima M."/>
            <person name="Kondo S."/>
            <person name="Konno H."/>
            <person name="Nakano K."/>
            <person name="Ninomiya N."/>
            <person name="Nishio T."/>
            <person name="Okada M."/>
            <person name="Plessy C."/>
            <person name="Shibata K."/>
            <person name="Shiraki T."/>
            <person name="Suzuki S."/>
            <person name="Tagami M."/>
            <person name="Waki K."/>
            <person name="Watahiki A."/>
            <person name="Okamura-Oho Y."/>
            <person name="Suzuki H."/>
            <person name="Kawai J."/>
            <person name="Hayashizaki Y."/>
        </authorList>
    </citation>
    <scope>NUCLEOTIDE SEQUENCE [LARGE SCALE MRNA] (ISOFORM 1)</scope>
    <source>
        <strain>C57BL/6J</strain>
        <tissue>Spleen</tissue>
    </source>
</reference>
<reference key="8">
    <citation type="journal article" date="2004" name="Genome Res.">
        <title>The status, quality, and expansion of the NIH full-length cDNA project: the Mammalian Gene Collection (MGC).</title>
        <authorList>
            <consortium name="The MGC Project Team"/>
        </authorList>
    </citation>
    <scope>NUCLEOTIDE SEQUENCE [LARGE SCALE MRNA] (ISOFORM 2)</scope>
    <source>
        <tissue>Thyroid</tissue>
    </source>
</reference>
<reference key="9">
    <citation type="journal article" date="1996" name="Proc. Natl. Acad. Sci. U.S.A.">
        <title>Analysis of lipopolysaccharide-response genes in B-lineage cells demonstrates that they can have differentiation stage-restricted expression and contain SH2 domains.</title>
        <authorList>
            <person name="Kerr W.G."/>
            <person name="Heller M."/>
            <person name="Herzenberg L.A."/>
        </authorList>
    </citation>
    <scope>NUCLEOTIDE SEQUENCE [MRNA] OF 1-106</scope>
</reference>
<reference key="10">
    <citation type="journal article" date="1996" name="Curr. Biol.">
        <title>Multiple forms of an inositol polyphosphate 5-phosphatase form signaling complexes with Shc and Grb2.</title>
        <authorList>
            <person name="Kavanaugh W.M."/>
            <person name="Pot D.A."/>
            <person name="Chin S.M."/>
            <person name="Deuter-Reinhard M."/>
            <person name="Jefferson A.B."/>
            <person name="Norris F.A."/>
            <person name="Masiarz F.R."/>
            <person name="Cousens L.S."/>
            <person name="Majerus P.W."/>
            <person name="Williams L.T."/>
        </authorList>
    </citation>
    <scope>PARTIAL PROTEIN SEQUENCE</scope>
</reference>
<reference key="11">
    <citation type="journal article" date="1996" name="Nature">
        <title>Role of the inositol phosphatase SHIP in negative regulation of the immune system by the receptor Fc(gamma)RIIB.</title>
        <authorList>
            <person name="Ono M."/>
            <person name="Bolland S."/>
            <person name="Tempst P."/>
            <person name="Ravetch J.V."/>
        </authorList>
    </citation>
    <scope>FUNCTION</scope>
</reference>
<reference key="12">
    <citation type="journal article" date="1996" name="J. Immunol.">
        <title>Negative signaling in B lymphocytes induces tyrosine phosphorylation of the 145-kDa inositol polyphosphate 5-phosphatase, SHIP.</title>
        <authorList>
            <person name="Chacko G.W."/>
            <person name="Tridandapani S."/>
            <person name="Damen J.E."/>
            <person name="Liu L."/>
            <person name="Krystal G."/>
            <person name="Coggeshall K.M."/>
        </authorList>
    </citation>
    <scope>PHOSPHORYLATION</scope>
</reference>
<reference key="13">
    <citation type="journal article" date="1997" name="Cell">
        <title>Deletion of SHIP or SHP-1 reveals two distinct pathways for inhibitory signaling.</title>
        <authorList>
            <person name="Ono M."/>
            <person name="Okada H."/>
            <person name="Bolland S."/>
            <person name="Yanagi S."/>
            <person name="Kurosaki T."/>
            <person name="Ravetch J.V."/>
        </authorList>
    </citation>
    <scope>FUNCTION</scope>
</reference>
<reference key="14">
    <citation type="journal article" date="1997" name="J. Biol. Chem.">
        <title>The Src homology 2 (SH2) domain of SH2-containing inositol phosphatase (SHIP) is essential for tyrosine phosphorylation of SHIP, its association with Shc, and its induction of apoptosis.</title>
        <authorList>
            <person name="Liu L."/>
            <person name="Damen J.E."/>
            <person name="Hughes M.R."/>
            <person name="Babic I."/>
            <person name="Jirik F.R."/>
            <person name="Krystal G."/>
        </authorList>
    </citation>
    <scope>DOMAIN SH2</scope>
    <scope>INTERACTION WITH SHC1</scope>
</reference>
<reference key="15">
    <citation type="journal article" date="1997" name="J. Biol. Chem.">
        <title>Shc interaction with Src homology 2 domain containing inositol phosphatase (SHIP) in vivo requires the Shc-phosphotyrosine binding domain and two specific phosphotyrosines on SHIP.</title>
        <authorList>
            <person name="Lamkin T.D."/>
            <person name="Walk S.F."/>
            <person name="Liu L."/>
            <person name="Damen J.E."/>
            <person name="Krystal G."/>
            <person name="Ravichandran K.S."/>
        </authorList>
    </citation>
    <scope>PHOSPHORYLATION AT TYR-918 AND TYR-1021</scope>
    <scope>INTERACTION WITH SHC1</scope>
    <scope>MUTAGENESIS OF TYR-918 AND TYR-1021</scope>
</reference>
<reference key="16">
    <citation type="journal article" date="1997" name="J. Biol. Chem.">
        <title>Interleukin-3 induces the association of the inositol 5-phosphatase SHIP with SHP2.</title>
        <authorList>
            <person name="Liu L."/>
            <person name="Damen J.E."/>
            <person name="Ware M.D."/>
            <person name="Krystal G."/>
        </authorList>
    </citation>
    <scope>INTERACTION WITH PTPN11</scope>
</reference>
<reference key="17">
    <citation type="journal article" date="1997" name="Nature">
        <title>A new pathway for synthesis of phosphatidylinositol-4,5-bisphosphate.</title>
        <authorList>
            <person name="Rameh L.E."/>
            <person name="Tolias K.F."/>
            <person name="Duckworth B.C."/>
            <person name="Cantley L.C."/>
        </authorList>
    </citation>
    <scope>CATALYTIC ACTIVITY</scope>
</reference>
<reference key="18">
    <citation type="journal article" date="1998" name="Eur. J. Immunol.">
        <title>Inhibition of antigen-induced T cell response and antibody-induced NK cell cytotoxicity by NKG2A: association of NKG2A with SHP-1 and SHP-2 protein-tyrosine phosphatases.</title>
        <authorList>
            <person name="Le Drean E."/>
            <person name="Vely F."/>
            <person name="Olcese L."/>
            <person name="Cambiaggi A."/>
            <person name="Guia S."/>
            <person name="Krystal G."/>
            <person name="Gervois N."/>
            <person name="Moretta A."/>
            <person name="Jotereau F."/>
            <person name="Vivier E."/>
        </authorList>
    </citation>
    <scope>INTERACTION WITH KLRC1</scope>
</reference>
<reference key="19">
    <citation type="journal article" date="2001" name="Traffic">
        <title>Disabled-2 colocalizes with the LDLR in clathrin-coated pits and interacts with AP-2.</title>
        <authorList>
            <person name="Morris S.M."/>
            <person name="Cooper J.A."/>
        </authorList>
    </citation>
    <scope>INTERACTION WITH DAB2</scope>
</reference>
<reference key="20">
    <citation type="journal article" date="2007" name="J. Immunol.">
        <title>Quantitative time-resolved phosphoproteomic analysis of mast cell signaling.</title>
        <authorList>
            <person name="Cao L."/>
            <person name="Yu K."/>
            <person name="Banh C."/>
            <person name="Nguyen V."/>
            <person name="Ritz A."/>
            <person name="Raphael B.J."/>
            <person name="Kawakami Y."/>
            <person name="Kawakami T."/>
            <person name="Salomon A.R."/>
        </authorList>
    </citation>
    <scope>PHOSPHORYLATION [LARGE SCALE ANALYSIS] AT SER-935 AND TYR-945</scope>
    <scope>IDENTIFICATION BY MASS SPECTROMETRY [LARGE SCALE ANALYSIS]</scope>
    <source>
        <tissue>Mast cell</tissue>
    </source>
</reference>
<reference key="21">
    <citation type="journal article" date="2009" name="Immunity">
        <title>The phagosomal proteome in interferon-gamma-activated macrophages.</title>
        <authorList>
            <person name="Trost M."/>
            <person name="English L."/>
            <person name="Lemieux S."/>
            <person name="Courcelles M."/>
            <person name="Desjardins M."/>
            <person name="Thibault P."/>
        </authorList>
    </citation>
    <scope>IDENTIFICATION BY MASS SPECTROMETRY [LARGE SCALE ANALYSIS]</scope>
</reference>
<reference key="22">
    <citation type="journal article" date="2010" name="Cell">
        <title>A tissue-specific atlas of mouse protein phosphorylation and expression.</title>
        <authorList>
            <person name="Huttlin E.L."/>
            <person name="Jedrychowski M.P."/>
            <person name="Elias J.E."/>
            <person name="Goswami T."/>
            <person name="Rad R."/>
            <person name="Beausoleil S.A."/>
            <person name="Villen J."/>
            <person name="Haas W."/>
            <person name="Sowa M.E."/>
            <person name="Gygi S.P."/>
        </authorList>
    </citation>
    <scope>PHOSPHORYLATION [LARGE SCALE ANALYSIS] AT SER-246; SER-935; THR-964; SER-967 AND SER-972</scope>
    <scope>IDENTIFICATION BY MASS SPECTROMETRY [LARGE SCALE ANALYSIS]</scope>
    <source>
        <tissue>Brown adipose tissue</tissue>
        <tissue>Heart</tissue>
        <tissue>Kidney</tissue>
        <tissue>Liver</tissue>
        <tissue>Lung</tissue>
        <tissue>Spleen</tissue>
        <tissue>Testis</tissue>
    </source>
</reference>
<reference key="23">
    <citation type="journal article" date="2010" name="Nat. Immunol.">
        <title>An immunoglobulin-like receptor, Allergin-1, inhibits immunoglobulin E-mediated immediate hypersensitivity reactions.</title>
        <authorList>
            <person name="Hitomi K."/>
            <person name="Tahara-Hanaoka S."/>
            <person name="Someya S."/>
            <person name="Fujiki A."/>
            <person name="Tada H."/>
            <person name="Sugiyama T."/>
            <person name="Shibayama S."/>
            <person name="Shibuya K."/>
            <person name="Shibuya A."/>
        </authorList>
    </citation>
    <scope>INTERACTION WITH MILR1</scope>
</reference>
<reference key="24">
    <citation type="journal article" date="1997" name="J. Biol. Chem.">
        <title>Tyrosine phosphorylation and relocation of SHIP are integrin-mediated in thrombin-stimulated human blood platelets.</title>
        <authorList>
            <person name="Giuriato S."/>
            <person name="Payrastre B."/>
            <person name="Drayer A.L."/>
            <person name="Plantavid M."/>
            <person name="Woscholski R."/>
            <person name="Parker P."/>
            <person name="Erneux C."/>
            <person name="Chap H."/>
        </authorList>
    </citation>
    <scope>ENZYME ACTIVITY</scope>
</reference>
<reference key="25">
    <citation type="journal article" date="1997" name="Oncogene">
        <title>The phosphatidylinositol polyphosphate 5-phosphatase SHIP and the protein tyrosine phosphatase SHP-2 form a complex in hematopoietic cells which can be regulated by BCR/ABL and growth factors.</title>
        <authorList>
            <person name="Sattler M."/>
            <person name="Salgia R."/>
            <person name="Shrikhande G."/>
            <person name="Verma S."/>
            <person name="Choi J.-L."/>
            <person name="Rohrschneider L.R."/>
            <person name="Griffin J.D."/>
        </authorList>
    </citation>
    <scope>INTERACTION WITH PTPN11</scope>
</reference>
<reference key="26">
    <citation type="journal article" date="1998" name="Blood">
        <title>Multiple forms of the SH2-containing inositol phosphatase, SHIP, are generated by C-terminal truncation.</title>
        <authorList>
            <person name="Damen J.E."/>
            <person name="Liu L."/>
            <person name="Ware M.D."/>
            <person name="Ermolaeva M."/>
            <person name="Majerus P.W."/>
            <person name="Krystal G."/>
        </authorList>
    </citation>
    <scope>SUBCELLULAR LOCATION</scope>
</reference>
<reference key="27">
    <citation type="journal article" date="1998" name="Blood">
        <title>The SH2-containing inositol polyphosphate 5-phosphatase, ship, is expressed during hematopoiesis and spermatogenesis.</title>
        <authorList>
            <person name="Liu Q."/>
            <person name="Shalaby F."/>
            <person name="Jones J."/>
            <person name="Bouchard D."/>
            <person name="Dumont D.J."/>
        </authorList>
    </citation>
    <scope>TISSUE SPECIFICITY</scope>
    <scope>DEVELOPMENTAL STAGE</scope>
</reference>
<reference key="28">
    <citation type="journal article" date="1998" name="EMBO J.">
        <title>Targeted disruption of SHIP leads to Steel factor-induced degranulation of mast cells.</title>
        <authorList>
            <person name="Huber M."/>
            <person name="Helgason C.D."/>
            <person name="Scheid M.P."/>
            <person name="Duronio V."/>
            <person name="Humphries R.K."/>
            <person name="Krystal G."/>
        </authorList>
    </citation>
    <scope>FUNCTION</scope>
    <scope>DISRUPTION PHENOTYPE</scope>
</reference>
<reference key="29">
    <citation type="journal article" date="1998" name="J. Exp. Med.">
        <title>The inositol polyphosphate 5-phosphatase ship is a crucial negative regulator of B cell antigen receptor signaling.</title>
        <authorList>
            <person name="Liu Q."/>
            <person name="Oliveira-Dos-Santos A.J."/>
            <person name="Mariathasan S."/>
            <person name="Bouchard D."/>
            <person name="Jones J."/>
            <person name="Sarao R."/>
            <person name="Kozieradzki I."/>
            <person name="Ohashi P.S."/>
            <person name="Penninger J.M."/>
            <person name="Dumont D.J."/>
        </authorList>
    </citation>
    <scope>FUNCTION</scope>
</reference>
<reference key="30">
    <citation type="journal article" date="1998" name="Proc. Natl. Acad. Sci. U.S.A.">
        <title>The src homology 2-containing inositol phosphatase (SHIP) is the gatekeeper of mast cell degranulation.</title>
        <authorList>
            <person name="Huber M."/>
            <person name="Helgason C.D."/>
            <person name="Damen J.E."/>
            <person name="Liu L."/>
            <person name="Humphries R.K."/>
            <person name="Krystal G."/>
        </authorList>
    </citation>
    <scope>FUNCTION</scope>
</reference>
<reference key="31">
    <citation type="journal article" date="1998" name="Genes Dev.">
        <title>Targeted disruption of SHIP leads to hemopoietic perturbations, lung pathology, and a shortened life span.</title>
        <authorList>
            <person name="Helgason C.D."/>
            <person name="Damen J.E."/>
            <person name="Rosten P."/>
            <person name="Grewal R."/>
            <person name="Sorensen P."/>
            <person name="Chappel S.M."/>
            <person name="Borowski A."/>
            <person name="Jirik F."/>
            <person name="Krystal G."/>
            <person name="Humphries R.K."/>
        </authorList>
    </citation>
    <scope>FUNCTION</scope>
    <scope>DISRUPTION PHENOTYPE</scope>
</reference>
<reference key="32">
    <citation type="journal article" date="1998" name="Mol. Immunol.">
        <title>Role of SHIP in FcgammaRIIb-mediated inhibition of Ras activation in B cells.</title>
        <authorList>
            <person name="Tridandapani S."/>
            <person name="Phee H."/>
            <person name="Shivakumar L."/>
            <person name="Kelley T.W."/>
            <person name="Coggeshall K.M."/>
        </authorList>
    </citation>
    <scope>INTERACTION WITH SHC1 AND FCGR2B</scope>
    <scope>PHOSPHORYLATION</scope>
</reference>
<reference key="33">
    <citation type="journal article" date="2000" name="Biochem. J.">
        <title>pp60c-src associates with the SH2-containing inositol-5-phosphatase SHIP1 and is involved in its tyrosine phosphorylation downstream of alphaIIbbeta3 integrin in human platelets.</title>
        <authorList>
            <person name="Giuriato S."/>
            <person name="Bodin S."/>
            <person name="Erneux C."/>
            <person name="Woscholski R."/>
            <person name="Plantavid M."/>
            <person name="Chap H."/>
            <person name="Payrastre B."/>
        </authorList>
    </citation>
    <scope>INTERACTION WITH SRC</scope>
</reference>
<reference key="34">
    <citation type="journal article" date="2000" name="J. Biol. Chem.">
        <title>The SH2 inositol 5-phosphatase Ship1 is recruited in an SH2-dependent manner to the erythropoietin receptor.</title>
        <authorList>
            <person name="Mason J.M."/>
            <person name="Beattie B.K."/>
            <person name="Liu Q."/>
            <person name="Dumont D.J."/>
            <person name="Barber D.L."/>
        </authorList>
    </citation>
    <scope>INTERACTION WITH EPOR</scope>
    <scope>PHOSPHORYLATION</scope>
</reference>
<reference key="35">
    <citation type="journal article" date="2000" name="J. Biol. Chem.">
        <title>Molecular basis of the recruitment of the SH2 domain-containing inositol 5-phosphatases SHIP1 and SHIP2 by fcgamma RIIB.</title>
        <authorList>
            <person name="Bruhns P."/>
            <person name="Vely F."/>
            <person name="Malbec O."/>
            <person name="Fridman W.H."/>
            <person name="Vivier E."/>
            <person name="Daeeron M."/>
        </authorList>
    </citation>
    <scope>INTERACTION WITH FCGR2B</scope>
</reference>
<reference key="36">
    <citation type="journal article" date="2000" name="Mol. Cell. Biol.">
        <title>Essential role for the C-terminal noncatalytic region of SHIP in FcgammaRIIB1-mediated inhibitory signaling.</title>
        <authorList>
            <person name="Aman M.J."/>
            <person name="Walk S.F."/>
            <person name="March M.E."/>
            <person name="Su H.-P."/>
            <person name="Carver D.J."/>
            <person name="Ravichandran K.S."/>
        </authorList>
    </citation>
    <scope>INTERACTION WITH FCGR2B</scope>
</reference>
<reference key="37">
    <citation type="journal article" date="2001" name="Blood">
        <title>SHIP's C-terminus is essential for its hydrolysis of PIP3 and inhibition of mast cell degranulation.</title>
        <authorList>
            <person name="Damen J.E."/>
            <person name="Ware M.D."/>
            <person name="Kalesnikoff J."/>
            <person name="Hughes M.R."/>
            <person name="Krystal G."/>
        </authorList>
    </citation>
    <scope>FUNCTION</scope>
    <scope>MUTAGENESIS OF ASP-676; TYR-918 AND TYR-1021</scope>
</reference>
<reference key="38">
    <citation type="journal article" date="2001" name="J. Biol. Chem.">
        <title>SHIP1, an SH2 domain containing polyinositol-5-phosphatase, regulates migration through two critical tyrosine residues and forms a novel signaling complex with DOK1 and CRKL.</title>
        <authorList>
            <person name="Sattler M."/>
            <person name="Verma S."/>
            <person name="Pride Y.B."/>
            <person name="Salgia R."/>
            <person name="Rohrschneider L.R."/>
            <person name="Griffin J.D."/>
        </authorList>
    </citation>
    <scope>INTERACTION WITH DOK1 AND CRKL</scope>
    <scope>MUTAGENESIS OF TYR-918 AND TYR-1021</scope>
</reference>
<reference key="39">
    <citation type="journal article" date="2001" name="J. Biol. Chem.">
        <title>Src homology 2 domain-containing inositol 5-phosphatase 1 mediates cell cycle arrest by FcgammaRIIB.</title>
        <authorList>
            <person name="Malbec O."/>
            <person name="Schmitt C."/>
            <person name="Bruhns P."/>
            <person name="Krystal G."/>
            <person name="Fridman W.H."/>
            <person name="Daeeron M."/>
        </authorList>
    </citation>
    <scope>FUNCTION</scope>
</reference>
<reference key="40">
    <citation type="journal article" date="2001" name="J. Exp. Med.">
        <title>A regulatory role for Src homology 2 domain-containing inositol 5'-phosphatase (SHIP) in phagocytosis mediated by Fc gamma receptors and complement receptor 3 (alpha(M)beta(2); CD11b/CD18).</title>
        <authorList>
            <person name="Cox D."/>
            <person name="Dale B.M."/>
            <person name="Kashiwada M."/>
            <person name="Helgason C.D."/>
            <person name="Greenberg S."/>
        </authorList>
    </citation>
    <scope>FUNCTION</scope>
</reference>
<reference key="41">
    <citation type="journal article" date="2002" name="Blood">
        <title>SH2-containing inositol phosphatase (SHIP-1) transiently translocates to raft domains and modulates CD16-mediated cytotoxicity in human NK cells.</title>
        <authorList>
            <person name="Galandrini R."/>
            <person name="Tassi I."/>
            <person name="Mattia G."/>
            <person name="Lenti L."/>
            <person name="Piccoli M."/>
            <person name="Frati L."/>
            <person name="Santoni A."/>
        </authorList>
    </citation>
    <scope>SUBCELLULAR LOCATION</scope>
    <scope>INTERACTION WITH FCGR3</scope>
</reference>
<reference key="42">
    <citation type="journal article" date="2002" name="J. Immunol.">
        <title>Src homology 2 domain-containing inositol polyphosphate phosphatase regulates NF-kappa B-mediated gene transcription by phagocytic Fc gamma Rs in human myeloid cells.</title>
        <authorList>
            <person name="Tridandapani S."/>
            <person name="Wang Y."/>
            <person name="Marsh C.B."/>
            <person name="Anderson C.L."/>
        </authorList>
    </citation>
    <scope>FUNCTION</scope>
    <scope>INTERACTION WITH FCGR2A</scope>
    <scope>PHOSPHORYLATION</scope>
</reference>
<reference key="43">
    <citation type="journal article" date="2002" name="Nat. Cell Biol.">
        <title>Activin/TGF-beta induce apoptosis through Smad-dependent expression of the lipid phosphatase SHIP.</title>
        <authorList>
            <person name="Valderrama-Carvajal H."/>
            <person name="Cocolakis E."/>
            <person name="Lacerte A."/>
            <person name="Lee E.-H."/>
            <person name="Krystal G."/>
            <person name="Ali S."/>
            <person name="Lebrun J.-J."/>
        </authorList>
    </citation>
    <scope>FUNCTION</scope>
    <scope>INDUCTION</scope>
</reference>
<reference key="44">
    <citation type="journal article" date="2002" name="Nat. Med.">
        <title>SHIP-deficient mice are severely osteoporotic due to increased numbers of hyper-resorptive osteoclasts.</title>
        <authorList>
            <person name="Takeshita S."/>
            <person name="Namba N."/>
            <person name="Zhao J.J."/>
            <person name="Jiang Y."/>
            <person name="Genant H.K."/>
            <person name="Silva M.J."/>
            <person name="Brodt M.D."/>
            <person name="Helgason C.D."/>
            <person name="Kalesnikoff J."/>
            <person name="Rauh M.J."/>
            <person name="Humphries R.K."/>
            <person name="Krystal G."/>
            <person name="Teitelbaum S.L."/>
            <person name="Ross F.P."/>
        </authorList>
    </citation>
    <scope>FUNCTION</scope>
    <scope>DISRUPTION PHENOTYPE</scope>
</reference>
<reference key="45">
    <citation type="journal article" date="2002" name="Oncogene">
        <title>The SH2-containing inositol 5-phosphatase (SHIP)-1 is implicated in the control of cell-cell junction and induces dissociation and dispersion of MDCK cells.</title>
        <authorList>
            <person name="Mancini A."/>
            <person name="Koch A."/>
            <person name="Wilms R."/>
            <person name="Tamura T."/>
        </authorList>
    </citation>
    <scope>FUNCTION</scope>
    <scope>INTERACTION WITH MET</scope>
</reference>
<reference key="46">
    <citation type="journal article" date="2003" name="J. Biol. Chem.">
        <title>The inositol 5'-phosphatase SHIP-1 and the Src kinase Lyn negatively regulate macrophage colony-stimulating factor-induced Akt activity.</title>
        <authorList>
            <person name="Baran C.P."/>
            <person name="Tridandapani S."/>
            <person name="Helgason C.D."/>
            <person name="Humphries R.K."/>
            <person name="Krystal G."/>
            <person name="Marsh C.B."/>
        </authorList>
    </citation>
    <scope>FUNCTION</scope>
</reference>
<reference key="47">
    <citation type="journal article" date="2004" name="J. Biol. Chem.">
        <title>SHIP1 and Lyn kinase negatively regulate integrin alpha IIb beta 3 signaling in platelets.</title>
        <authorList>
            <person name="Maxwell M.J."/>
            <person name="Yuan Y."/>
            <person name="Anderson K.E."/>
            <person name="Hibbs M.L."/>
            <person name="Salem H.H."/>
            <person name="Jackson S.P."/>
        </authorList>
    </citation>
    <scope>FUNCTION</scope>
</reference>
<reference key="48">
    <citation type="journal article" date="2004" name="J. Biol. Chem.">
        <title>Two distinct tyrosine-based motifs enable the inhibitory receptor FcgammaRIIB to cooperatively recruit the inositol phosphatases SHIP1/2 and the adapters Grb2/Grap.</title>
        <authorList>
            <person name="Isnardi I."/>
            <person name="Lesourne R."/>
            <person name="Bruhns P."/>
            <person name="Fridman W.H."/>
            <person name="Cambier J.C."/>
            <person name="Daeeron M."/>
        </authorList>
    </citation>
    <scope>INTERACTION WITH FCGR2B</scope>
</reference>
<reference key="49">
    <citation type="journal article" date="2004" name="J. Biol. Chem.">
        <title>SHIP family inositol phosphatases interact with and negatively regulate the Tec tyrosine kinase.</title>
        <authorList>
            <person name="Tomlinson M.G."/>
            <person name="Heath V.L."/>
            <person name="Turck C.W."/>
            <person name="Watson S.P."/>
            <person name="Weiss A."/>
        </authorList>
    </citation>
    <scope>INTERACTION WITH TEC</scope>
</reference>
<reference key="50">
    <citation type="journal article" date="2004" name="Mol. Cell. Biol.">
        <title>Inhibition of the Jun N-terminal protein kinase pathway by SHIP-1, a lipid phosphatase that interacts with the adaptor molecule Dok-3.</title>
        <authorList>
            <person name="Robson J.D."/>
            <person name="Davidson D."/>
            <person name="Veillette A."/>
        </authorList>
    </citation>
    <scope>FUNCTION</scope>
    <scope>INTERACTION WITH DOK3</scope>
</reference>
<reference key="51">
    <citation type="journal article" date="2005" name="Exp. Mol. Med.">
        <title>Inositol 5'-phosphatase, SHIP1 interacts with phospholipase C-gamma1 and modulates EGF-induced PLC activity.</title>
        <authorList>
            <person name="Song M."/>
            <person name="Kim M.J."/>
            <person name="Ha S."/>
            <person name="Park J.B."/>
            <person name="Ryu S.H."/>
            <person name="Suh P.-G."/>
        </authorList>
    </citation>
    <scope>INTERACTION WITH PLCG1</scope>
</reference>
<reference key="52">
    <citation type="journal article" date="2006" name="Immunol. Lett.">
        <title>The SH2 domain-containing inositol 5-phosphatase SHIP1 is recruited to the intracytoplasmic domain of human FcgammaRIIB and is mandatory for negative regulation of B cell activation.</title>
        <authorList>
            <person name="Isnardi I."/>
            <person name="Bruhns P."/>
            <person name="Bismuth G."/>
            <person name="Fridman W.H."/>
            <person name="Daeeron M."/>
        </authorList>
    </citation>
    <scope>SUBCELLULAR LOCATION</scope>
</reference>
<reference key="53">
    <citation type="journal article" date="2006" name="J. Immunol.">
        <title>SHIP1 negatively regulates proliferation of osteoclast precursors via Akt-dependent alterations in D-type cyclins and p27.</title>
        <authorList>
            <person name="Zhou P."/>
            <person name="Kitaura H."/>
            <person name="Teitelbaum S.L."/>
            <person name="Krystal G."/>
            <person name="Ross F.P."/>
            <person name="Takeshita S."/>
        </authorList>
    </citation>
    <scope>FUNCTION</scope>
</reference>
<reference key="54">
    <citation type="journal article" date="2006" name="Stem Cells Dev.">
        <title>s-SHIP associates with receptor complexes essential for pluripotent stem cell growth and survival.</title>
        <authorList>
            <person name="Desponts C."/>
            <person name="Ninos J.M."/>
            <person name="Kerr W.G."/>
        </authorList>
    </citation>
    <scope>INTERACTION WITH IL6ST</scope>
</reference>
<reference key="55">
    <citation type="journal article" date="2007" name="Nat. Cell Biol.">
        <title>Control of cell polarity and motility by the PtdIns(3,4,5)P3 phosphatase SHIP1.</title>
        <authorList>
            <person name="Nishio M."/>
            <person name="Watanabe K."/>
            <person name="Sasaki J."/>
            <person name="Taya C."/>
            <person name="Takasuga S."/>
            <person name="Iizuka R."/>
            <person name="Balla T."/>
            <person name="Yamazaki M."/>
            <person name="Watanabe H."/>
            <person name="Itoh R."/>
            <person name="Kuroda S."/>
            <person name="Horie Y."/>
            <person name="Foerster I."/>
            <person name="Mak T.W."/>
            <person name="Yonekawa H."/>
            <person name="Penninger J.M."/>
            <person name="Kanaho Y."/>
            <person name="Suzuki A."/>
            <person name="Sasaki T."/>
        </authorList>
    </citation>
    <scope>FUNCTION</scope>
</reference>
<evidence type="ECO:0000250" key="1">
    <source>
        <dbReference type="UniProtKB" id="P97573"/>
    </source>
</evidence>
<evidence type="ECO:0000250" key="2">
    <source>
        <dbReference type="UniProtKB" id="Q92835"/>
    </source>
</evidence>
<evidence type="ECO:0000255" key="3">
    <source>
        <dbReference type="PROSITE-ProRule" id="PRU00191"/>
    </source>
</evidence>
<evidence type="ECO:0000256" key="4">
    <source>
        <dbReference type="SAM" id="MobiDB-lite"/>
    </source>
</evidence>
<evidence type="ECO:0000269" key="5">
    <source>
    </source>
</evidence>
<evidence type="ECO:0000269" key="6">
    <source>
    </source>
</evidence>
<evidence type="ECO:0000269" key="7">
    <source>
    </source>
</evidence>
<evidence type="ECO:0000269" key="8">
    <source>
    </source>
</evidence>
<evidence type="ECO:0000269" key="9">
    <source>
    </source>
</evidence>
<evidence type="ECO:0000269" key="10">
    <source>
    </source>
</evidence>
<evidence type="ECO:0000269" key="11">
    <source>
    </source>
</evidence>
<evidence type="ECO:0000269" key="12">
    <source>
    </source>
</evidence>
<evidence type="ECO:0000269" key="13">
    <source>
    </source>
</evidence>
<evidence type="ECO:0000269" key="14">
    <source>
    </source>
</evidence>
<evidence type="ECO:0000269" key="15">
    <source>
    </source>
</evidence>
<evidence type="ECO:0000269" key="16">
    <source>
    </source>
</evidence>
<evidence type="ECO:0000269" key="17">
    <source>
    </source>
</evidence>
<evidence type="ECO:0000269" key="18">
    <source>
    </source>
</evidence>
<evidence type="ECO:0000269" key="19">
    <source>
    </source>
</evidence>
<evidence type="ECO:0000269" key="20">
    <source>
    </source>
</evidence>
<evidence type="ECO:0000269" key="21">
    <source>
    </source>
</evidence>
<evidence type="ECO:0000269" key="22">
    <source>
    </source>
</evidence>
<evidence type="ECO:0000269" key="23">
    <source>
    </source>
</evidence>
<evidence type="ECO:0000269" key="24">
    <source>
    </source>
</evidence>
<evidence type="ECO:0000269" key="25">
    <source>
    </source>
</evidence>
<evidence type="ECO:0000269" key="26">
    <source>
    </source>
</evidence>
<evidence type="ECO:0000269" key="27">
    <source>
    </source>
</evidence>
<evidence type="ECO:0000269" key="28">
    <source>
    </source>
</evidence>
<evidence type="ECO:0000269" key="29">
    <source>
    </source>
</evidence>
<evidence type="ECO:0000269" key="30">
    <source>
    </source>
</evidence>
<evidence type="ECO:0000269" key="31">
    <source>
    </source>
</evidence>
<evidence type="ECO:0000269" key="32">
    <source>
    </source>
</evidence>
<evidence type="ECO:0000269" key="33">
    <source>
    </source>
</evidence>
<evidence type="ECO:0000269" key="34">
    <source>
    </source>
</evidence>
<evidence type="ECO:0000269" key="35">
    <source>
    </source>
</evidence>
<evidence type="ECO:0000269" key="36">
    <source>
    </source>
</evidence>
<evidence type="ECO:0000269" key="37">
    <source>
    </source>
</evidence>
<evidence type="ECO:0000269" key="38">
    <source>
    </source>
</evidence>
<evidence type="ECO:0000269" key="39">
    <source>
    </source>
</evidence>
<evidence type="ECO:0000269" key="40">
    <source>
    </source>
</evidence>
<evidence type="ECO:0000269" key="41">
    <source>
    </source>
</evidence>
<evidence type="ECO:0000269" key="42">
    <source>
    </source>
</evidence>
<evidence type="ECO:0000269" key="43">
    <source>
    </source>
</evidence>
<evidence type="ECO:0000269" key="44">
    <source>
    </source>
</evidence>
<evidence type="ECO:0000269" key="45">
    <source>
    </source>
</evidence>
<evidence type="ECO:0000269" key="46">
    <source>
    </source>
</evidence>
<evidence type="ECO:0000269" key="47">
    <source>
    </source>
</evidence>
<evidence type="ECO:0000269" key="48">
    <source>
    </source>
</evidence>
<evidence type="ECO:0000269" key="49">
    <source>
    </source>
</evidence>
<evidence type="ECO:0000269" key="50">
    <source>
    </source>
</evidence>
<evidence type="ECO:0000303" key="51">
    <source>
    </source>
</evidence>
<evidence type="ECO:0000303" key="52">
    <source>
    </source>
</evidence>
<evidence type="ECO:0000303" key="53">
    <source>
    </source>
</evidence>
<evidence type="ECO:0000303" key="54">
    <source>
    </source>
</evidence>
<evidence type="ECO:0000303" key="55">
    <source>
    </source>
</evidence>
<evidence type="ECO:0000303" key="56">
    <source>
    </source>
</evidence>
<evidence type="ECO:0000305" key="57"/>
<evidence type="ECO:0000305" key="58">
    <source>
    </source>
</evidence>
<evidence type="ECO:0000305" key="59">
    <source>
    </source>
</evidence>
<evidence type="ECO:0007744" key="60">
    <source>
    </source>
</evidence>
<evidence type="ECO:0007744" key="61">
    <source>
    </source>
</evidence>
<evidence type="ECO:0007829" key="62">
    <source>
        <dbReference type="PDB" id="6DLG"/>
    </source>
</evidence>
<feature type="chain" id="PRO_0000302867" description="Phosphatidylinositol 3,4,5-trisphosphate 5-phosphatase 1">
    <location>
        <begin position="1"/>
        <end position="1191"/>
    </location>
</feature>
<feature type="domain" description="SH2" evidence="3">
    <location>
        <begin position="8"/>
        <end position="104"/>
    </location>
</feature>
<feature type="region of interest" description="Disordered" evidence="4">
    <location>
        <begin position="122"/>
        <end position="148"/>
    </location>
</feature>
<feature type="region of interest" description="Disordered" evidence="4">
    <location>
        <begin position="947"/>
        <end position="994"/>
    </location>
</feature>
<feature type="region of interest" description="Interaction with DAB2" evidence="14">
    <location>
        <begin position="1015"/>
        <end position="1029"/>
    </location>
</feature>
<feature type="region of interest" description="Disordered" evidence="4">
    <location>
        <begin position="1021"/>
        <end position="1191"/>
    </location>
</feature>
<feature type="short sequence motif" description="SH3-binding 1">
    <location>
        <begin position="127"/>
        <end position="132"/>
    </location>
</feature>
<feature type="short sequence motif" description="NPXY motif 1">
    <location>
        <begin position="915"/>
        <end position="918"/>
    </location>
</feature>
<feature type="short sequence motif" description="SH3-binding 2">
    <location>
        <begin position="970"/>
        <end position="975"/>
    </location>
</feature>
<feature type="short sequence motif" description="NPXY motif 2">
    <location>
        <begin position="1018"/>
        <end position="1021"/>
    </location>
</feature>
<feature type="short sequence motif" description="SH3-binding 3">
    <location>
        <begin position="1039"/>
        <end position="1050"/>
    </location>
</feature>
<feature type="compositionally biased region" description="Pro residues" evidence="4">
    <location>
        <begin position="962"/>
        <end position="972"/>
    </location>
</feature>
<feature type="compositionally biased region" description="Basic and acidic residues" evidence="4">
    <location>
        <begin position="1032"/>
        <end position="1046"/>
    </location>
</feature>
<feature type="compositionally biased region" description="Pro residues" evidence="4">
    <location>
        <begin position="1141"/>
        <end position="1150"/>
    </location>
</feature>
<feature type="compositionally biased region" description="Basic and acidic residues" evidence="4">
    <location>
        <begin position="1162"/>
        <end position="1184"/>
    </location>
</feature>
<feature type="modified residue" description="Phosphoserine" evidence="61">
    <location>
        <position position="246"/>
    </location>
</feature>
<feature type="modified residue" description="Phosphotyrosine" evidence="38">
    <location>
        <position position="918"/>
    </location>
</feature>
<feature type="modified residue" description="Phosphoserine" evidence="60 61">
    <location>
        <position position="935"/>
    </location>
</feature>
<feature type="modified residue" description="Phosphotyrosine" evidence="60">
    <location>
        <position position="945"/>
    </location>
</feature>
<feature type="modified residue" description="Phosphothreonine" evidence="61">
    <location>
        <position position="964"/>
    </location>
</feature>
<feature type="modified residue" description="Phosphoserine" evidence="61">
    <location>
        <position position="967"/>
    </location>
</feature>
<feature type="modified residue" description="Phosphoserine" evidence="61">
    <location>
        <position position="972"/>
    </location>
</feature>
<feature type="modified residue" description="Phosphotyrosine" evidence="38">
    <location>
        <position position="1021"/>
    </location>
</feature>
<feature type="splice variant" id="VSP_027980" description="In isoform 5 and isoform 6." evidence="53">
    <location>
        <begin position="1"/>
        <end position="263"/>
    </location>
</feature>
<feature type="splice variant" id="VSP_027981" description="In isoform 2 and isoform 4." evidence="52 54 55 56">
    <location>
        <position position="120"/>
    </location>
</feature>
<feature type="splice variant" id="VSP_027982" description="In isoform 3 and isoform 6." evidence="51">
    <location>
        <begin position="920"/>
        <end position="980"/>
    </location>
</feature>
<feature type="splice variant" id="VSP_027983" description="In isoform 4." evidence="52">
    <original>GMGPFGQPLHGKSTLSPDQQLTAWSYDQLPKDSSLGPGRGE</original>
    <variation>VFIFHSQPRSLPQGARGKTWGSGKGGSSAPGGPAADEARDV</variation>
    <location>
        <begin position="920"/>
        <end position="960"/>
    </location>
</feature>
<feature type="splice variant" id="VSP_027984" description="In isoform 4." evidence="52">
    <location>
        <begin position="961"/>
        <end position="1191"/>
    </location>
</feature>
<feature type="mutagenesis site" description="Loss of function." evidence="13">
    <original>D</original>
    <variation>G</variation>
    <location>
        <position position="676"/>
    </location>
</feature>
<feature type="mutagenesis site" description="Strongly impairs function, tyrosine phosphorylation, subcellular location and interaction with DOK1; when associated with F-1021." evidence="11 13 38">
    <original>Y</original>
    <variation>F</variation>
    <location>
        <position position="918"/>
    </location>
</feature>
<feature type="mutagenesis site" description="Strongly impairs function, tyrosine phosphorylation, subcellular location and interaction with DOK1; when associated with F-918." evidence="11 13 38">
    <original>Y</original>
    <variation>F</variation>
    <location>
        <position position="1021"/>
    </location>
</feature>
<feature type="sequence conflict" description="In Ref. 2; AAB18937." evidence="57" ref="2">
    <original>Y</original>
    <variation>C</variation>
    <location>
        <position position="43"/>
    </location>
</feature>
<feature type="sequence conflict" description="In Ref. 3; AAC53023." evidence="57" ref="3">
    <original>V</original>
    <variation>A</variation>
    <location>
        <position position="527"/>
    </location>
</feature>
<feature type="sequence conflict" description="In Ref. 3; AAC53023." evidence="57" ref="3">
    <original>N</original>
    <variation>I</variation>
    <location>
        <position position="534"/>
    </location>
</feature>
<feature type="sequence conflict" description="In Ref. 2; AA sequence." evidence="57" ref="2">
    <original>C</original>
    <variation>E</variation>
    <location>
        <position position="905"/>
    </location>
</feature>
<feature type="sequence conflict" description="In Ref. 2; AAB18937." evidence="57" ref="2">
    <original>A</original>
    <variation>T</variation>
    <location>
        <position position="981"/>
    </location>
</feature>
<feature type="strand" evidence="62">
    <location>
        <begin position="405"/>
        <end position="415"/>
    </location>
</feature>
<feature type="helix" evidence="62">
    <location>
        <begin position="426"/>
        <end position="429"/>
    </location>
</feature>
<feature type="strand" evidence="62">
    <location>
        <begin position="433"/>
        <end position="437"/>
    </location>
</feature>
<feature type="strand" evidence="62">
    <location>
        <begin position="448"/>
        <end position="456"/>
    </location>
</feature>
<feature type="helix" evidence="62">
    <location>
        <begin position="461"/>
        <end position="476"/>
    </location>
</feature>
<feature type="strand" evidence="62">
    <location>
        <begin position="481"/>
        <end position="488"/>
    </location>
</feature>
<feature type="strand" evidence="62">
    <location>
        <begin position="491"/>
        <end position="497"/>
    </location>
</feature>
<feature type="helix" evidence="62">
    <location>
        <begin position="499"/>
        <end position="504"/>
    </location>
</feature>
<feature type="strand" evidence="62">
    <location>
        <begin position="505"/>
        <end position="514"/>
    </location>
</feature>
<feature type="strand" evidence="62">
    <location>
        <begin position="525"/>
        <end position="533"/>
    </location>
</feature>
<feature type="strand" evidence="62">
    <location>
        <begin position="536"/>
        <end position="544"/>
    </location>
</feature>
<feature type="helix" evidence="62">
    <location>
        <begin position="549"/>
        <end position="551"/>
    </location>
</feature>
<feature type="helix" evidence="62">
    <location>
        <begin position="552"/>
        <end position="565"/>
    </location>
</feature>
<feature type="turn" evidence="62">
    <location>
        <begin position="578"/>
        <end position="580"/>
    </location>
</feature>
<feature type="strand" evidence="62">
    <location>
        <begin position="583"/>
        <end position="590"/>
    </location>
</feature>
<feature type="helix" evidence="62">
    <location>
        <begin position="599"/>
        <end position="601"/>
    </location>
</feature>
<feature type="helix" evidence="62">
    <location>
        <begin position="602"/>
        <end position="610"/>
    </location>
</feature>
<feature type="helix" evidence="62">
    <location>
        <begin position="614"/>
        <end position="618"/>
    </location>
</feature>
<feature type="helix" evidence="62">
    <location>
        <begin position="622"/>
        <end position="628"/>
    </location>
</feature>
<feature type="strand" evidence="62">
    <location>
        <begin position="631"/>
        <end position="633"/>
    </location>
</feature>
<feature type="strand" evidence="62">
    <location>
        <begin position="676"/>
        <end position="682"/>
    </location>
</feature>
<feature type="strand" evidence="62">
    <location>
        <begin position="688"/>
        <end position="695"/>
    </location>
</feature>
<feature type="strand" evidence="62">
    <location>
        <begin position="701"/>
        <end position="704"/>
    </location>
</feature>
<feature type="strand" evidence="62">
    <location>
        <begin position="707"/>
        <end position="714"/>
    </location>
</feature>
<feature type="strand" evidence="62">
    <location>
        <begin position="734"/>
        <end position="744"/>
    </location>
</feature>
<feature type="strand" evidence="62">
    <location>
        <begin position="751"/>
        <end position="756"/>
    </location>
</feature>
<feature type="strand" evidence="62">
    <location>
        <begin position="760"/>
        <end position="762"/>
    </location>
</feature>
<feature type="strand" evidence="62">
    <location>
        <begin position="770"/>
        <end position="773"/>
    </location>
</feature>
<feature type="strand" evidence="62">
    <location>
        <begin position="778"/>
        <end position="783"/>
    </location>
</feature>
<feature type="helix" evidence="62">
    <location>
        <begin position="797"/>
        <end position="800"/>
    </location>
</feature>
<feature type="strand" evidence="62">
    <location>
        <begin position="804"/>
        <end position="811"/>
    </location>
</feature>
<feature type="turn" evidence="62">
    <location>
        <begin position="812"/>
        <end position="814"/>
    </location>
</feature>
<feature type="strand" evidence="62">
    <location>
        <begin position="817"/>
        <end position="824"/>
    </location>
</feature>
<feature type="strand" evidence="62">
    <location>
        <begin position="835"/>
        <end position="842"/>
    </location>
</feature>
<feature type="strand" evidence="62">
    <location>
        <begin position="845"/>
        <end position="855"/>
    </location>
</feature>
<dbReference type="EC" id="3.1.3.86" evidence="33 34 41"/>
<dbReference type="EC" id="3.1.3.56" evidence="2"/>
<dbReference type="EC" id="3.1.3.36" evidence="42"/>
<dbReference type="EMBL" id="U51742">
    <property type="protein sequence ID" value="AAC52606.1"/>
    <property type="molecule type" value="mRNA"/>
</dbReference>
<dbReference type="EMBL" id="U39203">
    <property type="protein sequence ID" value="AAB18937.1"/>
    <property type="molecule type" value="mRNA"/>
</dbReference>
<dbReference type="EMBL" id="U52044">
    <property type="protein sequence ID" value="AAC53023.1"/>
    <property type="molecule type" value="mRNA"/>
</dbReference>
<dbReference type="EMBL" id="AF125996">
    <property type="protein sequence ID" value="AAD37118.1"/>
    <property type="molecule type" value="mRNA"/>
</dbReference>
<dbReference type="EMBL" id="AF235502">
    <property type="protein sequence ID" value="AAG23922.1"/>
    <property type="molecule type" value="Genomic_DNA"/>
</dbReference>
<dbReference type="EMBL" id="AF235496">
    <property type="protein sequence ID" value="AAG23922.1"/>
    <property type="status" value="JOINED"/>
    <property type="molecule type" value="Genomic_DNA"/>
</dbReference>
<dbReference type="EMBL" id="AF235498">
    <property type="protein sequence ID" value="AAG23922.1"/>
    <property type="status" value="JOINED"/>
    <property type="molecule type" value="Genomic_DNA"/>
</dbReference>
<dbReference type="EMBL" id="AF235499">
    <property type="protein sequence ID" value="AAG23922.1"/>
    <property type="status" value="JOINED"/>
    <property type="molecule type" value="Genomic_DNA"/>
</dbReference>
<dbReference type="EMBL" id="AF235500">
    <property type="protein sequence ID" value="AAG23922.1"/>
    <property type="status" value="JOINED"/>
    <property type="molecule type" value="Genomic_DNA"/>
</dbReference>
<dbReference type="EMBL" id="AF235501">
    <property type="protein sequence ID" value="AAG23922.1"/>
    <property type="status" value="JOINED"/>
    <property type="molecule type" value="Genomic_DNA"/>
</dbReference>
<dbReference type="EMBL" id="AF228679">
    <property type="protein sequence ID" value="AAF69143.1"/>
    <property type="molecule type" value="mRNA"/>
</dbReference>
<dbReference type="EMBL" id="AF184912">
    <property type="protein sequence ID" value="AAF25823.1"/>
    <property type="molecule type" value="mRNA"/>
</dbReference>
<dbReference type="EMBL" id="AF184913">
    <property type="protein sequence ID" value="AAF25824.1"/>
    <property type="molecule type" value="mRNA"/>
</dbReference>
<dbReference type="EMBL" id="AK143560">
    <property type="protein sequence ID" value="BAE25436.1"/>
    <property type="molecule type" value="mRNA"/>
</dbReference>
<dbReference type="EMBL" id="BC108328">
    <property type="protein sequence ID" value="AAI08329.1"/>
    <property type="molecule type" value="mRNA"/>
</dbReference>
<dbReference type="CCDS" id="CCDS35655.1">
    <molecule id="Q9ES52-1"/>
</dbReference>
<dbReference type="CCDS" id="CCDS48310.1">
    <molecule id="Q9ES52-3"/>
</dbReference>
<dbReference type="CCDS" id="CCDS48311.1">
    <molecule id="Q9ES52-2"/>
</dbReference>
<dbReference type="PIR" id="JC6118">
    <property type="entry name" value="JC6118"/>
</dbReference>
<dbReference type="RefSeq" id="NP_001103662.1">
    <molecule id="Q9ES52-2"/>
    <property type="nucleotide sequence ID" value="NM_001110192.2"/>
</dbReference>
<dbReference type="RefSeq" id="NP_001103663.1">
    <molecule id="Q9ES52-3"/>
    <property type="nucleotide sequence ID" value="NM_001110193.2"/>
</dbReference>
<dbReference type="RefSeq" id="NP_034696.2">
    <molecule id="Q9ES52-1"/>
    <property type="nucleotide sequence ID" value="NM_010566.3"/>
</dbReference>
<dbReference type="PDB" id="6DLG">
    <property type="method" value="X-ray"/>
    <property type="resolution" value="1.50 A"/>
    <property type="chains" value="A=402-861"/>
</dbReference>
<dbReference type="PDBsum" id="6DLG"/>
<dbReference type="SMR" id="Q9ES52"/>
<dbReference type="BioGRID" id="200769">
    <property type="interactions" value="30"/>
</dbReference>
<dbReference type="CORUM" id="Q9ES52"/>
<dbReference type="FunCoup" id="Q9ES52">
    <property type="interactions" value="772"/>
</dbReference>
<dbReference type="IntAct" id="Q9ES52">
    <property type="interactions" value="16"/>
</dbReference>
<dbReference type="MINT" id="Q9ES52"/>
<dbReference type="STRING" id="10090.ENSMUSP00000127941"/>
<dbReference type="SwissLipids" id="SLP:000000873"/>
<dbReference type="GlyGen" id="Q9ES52">
    <property type="glycosylation" value="3 sites, 1 N-linked glycan (1 site)"/>
</dbReference>
<dbReference type="iPTMnet" id="Q9ES52"/>
<dbReference type="PhosphoSitePlus" id="Q9ES52"/>
<dbReference type="SwissPalm" id="Q9ES52"/>
<dbReference type="jPOST" id="Q9ES52"/>
<dbReference type="PaxDb" id="10090-ENSMUSP00000127941"/>
<dbReference type="PeptideAtlas" id="Q9ES52"/>
<dbReference type="ProteomicsDB" id="255405">
    <molecule id="Q9ES52-1"/>
</dbReference>
<dbReference type="ProteomicsDB" id="255406">
    <molecule id="Q9ES52-2"/>
</dbReference>
<dbReference type="ProteomicsDB" id="255407">
    <molecule id="Q9ES52-3"/>
</dbReference>
<dbReference type="ProteomicsDB" id="255408">
    <molecule id="Q9ES52-4"/>
</dbReference>
<dbReference type="ProteomicsDB" id="255409">
    <molecule id="Q9ES52-5"/>
</dbReference>
<dbReference type="ProteomicsDB" id="255410">
    <molecule id="Q9ES52-6"/>
</dbReference>
<dbReference type="Antibodypedia" id="4272">
    <property type="antibodies" value="573 antibodies from 43 providers"/>
</dbReference>
<dbReference type="DNASU" id="16331"/>
<dbReference type="Ensembl" id="ENSMUST00000042275.15">
    <molecule id="Q9ES52-2"/>
    <property type="protein sequence ID" value="ENSMUSP00000044647.9"/>
    <property type="gene ID" value="ENSMUSG00000026288.15"/>
</dbReference>
<dbReference type="Ensembl" id="ENSMUST00000072999.13">
    <molecule id="Q9ES52-4"/>
    <property type="protein sequence ID" value="ENSMUSP00000072763.7"/>
    <property type="gene ID" value="ENSMUSG00000026288.15"/>
</dbReference>
<dbReference type="Ensembl" id="ENSMUST00000167032.2">
    <molecule id="Q9ES52-5"/>
    <property type="protein sequence ID" value="ENSMUSP00000126569.2"/>
    <property type="gene ID" value="ENSMUSG00000026288.15"/>
</dbReference>
<dbReference type="Ensembl" id="ENSMUST00000168783.8">
    <molecule id="Q9ES52-3"/>
    <property type="protein sequence ID" value="ENSMUSP00000131244.2"/>
    <property type="gene ID" value="ENSMUSG00000026288.15"/>
</dbReference>
<dbReference type="Ensembl" id="ENSMUST00000169754.8">
    <molecule id="Q9ES52-1"/>
    <property type="protein sequence ID" value="ENSMUSP00000127941.2"/>
    <property type="gene ID" value="ENSMUSG00000026288.15"/>
</dbReference>
<dbReference type="Ensembl" id="ENSMUST00000170300.8">
    <molecule id="Q9ES52-6"/>
    <property type="protein sequence ID" value="ENSMUSP00000132384.2"/>
    <property type="gene ID" value="ENSMUSG00000026288.15"/>
</dbReference>
<dbReference type="GeneID" id="16331"/>
<dbReference type="KEGG" id="mmu:16331"/>
<dbReference type="UCSC" id="uc007bxc.3">
    <molecule id="Q9ES52-1"/>
    <property type="organism name" value="mouse"/>
</dbReference>
<dbReference type="UCSC" id="uc007bxd.3">
    <molecule id="Q9ES52-3"/>
    <property type="organism name" value="mouse"/>
</dbReference>
<dbReference type="UCSC" id="uc007bxf.3">
    <molecule id="Q9ES52-2"/>
    <property type="organism name" value="mouse"/>
</dbReference>
<dbReference type="UCSC" id="uc007bxg.3">
    <molecule id="Q9ES52-6"/>
    <property type="organism name" value="mouse"/>
</dbReference>
<dbReference type="AGR" id="MGI:107357"/>
<dbReference type="CTD" id="3635"/>
<dbReference type="MGI" id="MGI:107357">
    <property type="gene designation" value="Inpp5d"/>
</dbReference>
<dbReference type="VEuPathDB" id="HostDB:ENSMUSG00000026288"/>
<dbReference type="eggNOG" id="KOG0565">
    <property type="taxonomic scope" value="Eukaryota"/>
</dbReference>
<dbReference type="GeneTree" id="ENSGT00940000156202"/>
<dbReference type="HOGENOM" id="CLU_007493_1_0_1"/>
<dbReference type="InParanoid" id="Q9ES52"/>
<dbReference type="OMA" id="DSWFQCK"/>
<dbReference type="OrthoDB" id="7862313at2759"/>
<dbReference type="PhylomeDB" id="Q9ES52"/>
<dbReference type="TreeFam" id="TF323475"/>
<dbReference type="Reactome" id="R-MMU-1660499">
    <property type="pathway name" value="Synthesis of PIPs at the plasma membrane"/>
</dbReference>
<dbReference type="Reactome" id="R-MMU-1855204">
    <property type="pathway name" value="Synthesis of IP3 and IP4 in the cytosol"/>
</dbReference>
<dbReference type="Reactome" id="R-MMU-202424">
    <property type="pathway name" value="Downstream TCR signaling"/>
</dbReference>
<dbReference type="Reactome" id="R-MMU-210990">
    <property type="pathway name" value="PECAM1 interactions"/>
</dbReference>
<dbReference type="Reactome" id="R-MMU-912526">
    <property type="pathway name" value="Interleukin receptor SHC signaling"/>
</dbReference>
<dbReference type="BioGRID-ORCS" id="16331">
    <property type="hits" value="2 hits in 82 CRISPR screens"/>
</dbReference>
<dbReference type="ChiTaRS" id="Inpp5d">
    <property type="organism name" value="mouse"/>
</dbReference>
<dbReference type="PRO" id="PR:Q9ES52"/>
<dbReference type="Proteomes" id="UP000000589">
    <property type="component" value="Chromosome 1"/>
</dbReference>
<dbReference type="RNAct" id="Q9ES52">
    <property type="molecule type" value="protein"/>
</dbReference>
<dbReference type="Bgee" id="ENSMUSG00000026288">
    <property type="expression patterns" value="Expressed in stroma of bone marrow and 188 other cell types or tissues"/>
</dbReference>
<dbReference type="ExpressionAtlas" id="Q9ES52">
    <property type="expression patterns" value="baseline and differential"/>
</dbReference>
<dbReference type="GO" id="GO:0005856">
    <property type="term" value="C:cytoskeleton"/>
    <property type="evidence" value="ECO:0007669"/>
    <property type="project" value="UniProtKB-SubCell"/>
</dbReference>
<dbReference type="GO" id="GO:0005829">
    <property type="term" value="C:cytosol"/>
    <property type="evidence" value="ECO:0000304"/>
    <property type="project" value="Reactome"/>
</dbReference>
<dbReference type="GO" id="GO:0045121">
    <property type="term" value="C:membrane raft"/>
    <property type="evidence" value="ECO:0007669"/>
    <property type="project" value="UniProtKB-SubCell"/>
</dbReference>
<dbReference type="GO" id="GO:0005886">
    <property type="term" value="C:plasma membrane"/>
    <property type="evidence" value="ECO:0007669"/>
    <property type="project" value="UniProtKB-SubCell"/>
</dbReference>
<dbReference type="GO" id="GO:0052659">
    <property type="term" value="F:inositol-1,3,4,5-tetrakisphosphate 5-phosphatase activity"/>
    <property type="evidence" value="ECO:0007669"/>
    <property type="project" value="RHEA"/>
</dbReference>
<dbReference type="GO" id="GO:0004445">
    <property type="term" value="F:inositol-polyphosphate 5-phosphatase activity"/>
    <property type="evidence" value="ECO:0000314"/>
    <property type="project" value="MGI"/>
</dbReference>
<dbReference type="GO" id="GO:0034594">
    <property type="term" value="F:phosphatidylinositol trisphosphate phosphatase activity"/>
    <property type="evidence" value="ECO:0000314"/>
    <property type="project" value="MGI"/>
</dbReference>
<dbReference type="GO" id="GO:0034485">
    <property type="term" value="F:phosphatidylinositol-3,4,5-trisphosphate 5-phosphatase activity"/>
    <property type="evidence" value="ECO:0007669"/>
    <property type="project" value="UniProtKB-EC"/>
</dbReference>
<dbReference type="GO" id="GO:0004439">
    <property type="term" value="F:phosphatidylinositol-4,5-bisphosphate 5-phosphatase activity"/>
    <property type="evidence" value="ECO:0007669"/>
    <property type="project" value="UniProtKB-EC"/>
</dbReference>
<dbReference type="GO" id="GO:0051425">
    <property type="term" value="F:PTB domain binding"/>
    <property type="evidence" value="ECO:0000314"/>
    <property type="project" value="MGI"/>
</dbReference>
<dbReference type="GO" id="GO:0017124">
    <property type="term" value="F:SH3 domain binding"/>
    <property type="evidence" value="ECO:0000314"/>
    <property type="project" value="MGI"/>
</dbReference>
<dbReference type="GO" id="GO:0006915">
    <property type="term" value="P:apoptotic process"/>
    <property type="evidence" value="ECO:0007669"/>
    <property type="project" value="UniProtKB-KW"/>
</dbReference>
<dbReference type="GO" id="GO:0008340">
    <property type="term" value="P:determination of adult lifespan"/>
    <property type="evidence" value="ECO:0000315"/>
    <property type="project" value="MGI"/>
</dbReference>
<dbReference type="GO" id="GO:0016064">
    <property type="term" value="P:immunoglobulin mediated immune response"/>
    <property type="evidence" value="ECO:0000315"/>
    <property type="project" value="MGI"/>
</dbReference>
<dbReference type="GO" id="GO:0035556">
    <property type="term" value="P:intracellular signal transduction"/>
    <property type="evidence" value="ECO:0000315"/>
    <property type="project" value="MGI"/>
</dbReference>
<dbReference type="GO" id="GO:0050869">
    <property type="term" value="P:negative regulation of B cell activation"/>
    <property type="evidence" value="ECO:0000315"/>
    <property type="project" value="MGI"/>
</dbReference>
<dbReference type="GO" id="GO:0030889">
    <property type="term" value="P:negative regulation of B cell proliferation"/>
    <property type="evidence" value="ECO:0000315"/>
    <property type="project" value="MGI"/>
</dbReference>
<dbReference type="GO" id="GO:0045779">
    <property type="term" value="P:negative regulation of bone resorption"/>
    <property type="evidence" value="ECO:0000315"/>
    <property type="project" value="MGI"/>
</dbReference>
<dbReference type="GO" id="GO:0008285">
    <property type="term" value="P:negative regulation of cell population proliferation"/>
    <property type="evidence" value="ECO:0000314"/>
    <property type="project" value="MGI"/>
</dbReference>
<dbReference type="GO" id="GO:0030853">
    <property type="term" value="P:negative regulation of granulocyte differentiation"/>
    <property type="evidence" value="ECO:0000315"/>
    <property type="project" value="MGI"/>
</dbReference>
<dbReference type="GO" id="GO:0050777">
    <property type="term" value="P:negative regulation of immune response"/>
    <property type="evidence" value="ECO:0000315"/>
    <property type="project" value="MGI"/>
</dbReference>
<dbReference type="GO" id="GO:0032715">
    <property type="term" value="P:negative regulation of interleukin-6 production"/>
    <property type="evidence" value="ECO:0000315"/>
    <property type="project" value="MGI"/>
</dbReference>
<dbReference type="GO" id="GO:0045656">
    <property type="term" value="P:negative regulation of monocyte differentiation"/>
    <property type="evidence" value="ECO:0000315"/>
    <property type="project" value="MGI"/>
</dbReference>
<dbReference type="GO" id="GO:0045953">
    <property type="term" value="P:negative regulation of natural killer cell mediated cytotoxicity"/>
    <property type="evidence" value="ECO:0007669"/>
    <property type="project" value="Ensembl"/>
</dbReference>
<dbReference type="GO" id="GO:0045659">
    <property type="term" value="P:negative regulation of neutrophil differentiation"/>
    <property type="evidence" value="ECO:0000315"/>
    <property type="project" value="MGI"/>
</dbReference>
<dbReference type="GO" id="GO:0045671">
    <property type="term" value="P:negative regulation of osteoclast differentiation"/>
    <property type="evidence" value="ECO:0000315"/>
    <property type="project" value="MGI"/>
</dbReference>
<dbReference type="GO" id="GO:0009968">
    <property type="term" value="P:negative regulation of signal transduction"/>
    <property type="evidence" value="ECO:0000315"/>
    <property type="project" value="MGI"/>
</dbReference>
<dbReference type="GO" id="GO:0046856">
    <property type="term" value="P:phosphatidylinositol dephosphorylation"/>
    <property type="evidence" value="ECO:0007669"/>
    <property type="project" value="InterPro"/>
</dbReference>
<dbReference type="GO" id="GO:0043065">
    <property type="term" value="P:positive regulation of apoptotic process"/>
    <property type="evidence" value="ECO:0000315"/>
    <property type="project" value="MGI"/>
</dbReference>
<dbReference type="GO" id="GO:0045579">
    <property type="term" value="P:positive regulation of B cell differentiation"/>
    <property type="evidence" value="ECO:0000315"/>
    <property type="project" value="MGI"/>
</dbReference>
<dbReference type="GO" id="GO:0045648">
    <property type="term" value="P:positive regulation of erythrocyte differentiation"/>
    <property type="evidence" value="ECO:0000315"/>
    <property type="project" value="MGI"/>
</dbReference>
<dbReference type="GO" id="GO:0045621">
    <property type="term" value="P:positive regulation of lymphocyte differentiation"/>
    <property type="evidence" value="ECO:0000315"/>
    <property type="project" value="MGI"/>
</dbReference>
<dbReference type="CDD" id="cd09100">
    <property type="entry name" value="INPP5c_SHIP1-INPP5D"/>
    <property type="match status" value="1"/>
</dbReference>
<dbReference type="CDD" id="cd10343">
    <property type="entry name" value="SH2_SHIP"/>
    <property type="match status" value="1"/>
</dbReference>
<dbReference type="FunFam" id="3.30.505.10:FF:000035">
    <property type="entry name" value="phosphatidylinositol 3,4,5-trisphosphate 5-phosphatase 1"/>
    <property type="match status" value="1"/>
</dbReference>
<dbReference type="FunFam" id="3.60.10.10:FF:000005">
    <property type="entry name" value="phosphatidylinositol 3,4,5-trisphosphate 5-phosphatase 1"/>
    <property type="match status" value="1"/>
</dbReference>
<dbReference type="Gene3D" id="3.60.10.10">
    <property type="entry name" value="Endonuclease/exonuclease/phosphatase"/>
    <property type="match status" value="1"/>
</dbReference>
<dbReference type="Gene3D" id="3.30.505.10">
    <property type="entry name" value="SH2 domain"/>
    <property type="match status" value="1"/>
</dbReference>
<dbReference type="InterPro" id="IPR036691">
    <property type="entry name" value="Endo/exonu/phosph_ase_sf"/>
</dbReference>
<dbReference type="InterPro" id="IPR000300">
    <property type="entry name" value="IPPc"/>
</dbReference>
<dbReference type="InterPro" id="IPR000980">
    <property type="entry name" value="SH2"/>
</dbReference>
<dbReference type="InterPro" id="IPR036860">
    <property type="entry name" value="SH2_dom_sf"/>
</dbReference>
<dbReference type="PANTHER" id="PTHR46051:SF3">
    <property type="entry name" value="PHOSPHATIDYLINOSITOL 3,4,5-TRISPHOSPHATE 5-PHOSPHATASE 1"/>
    <property type="match status" value="1"/>
</dbReference>
<dbReference type="PANTHER" id="PTHR46051">
    <property type="entry name" value="SH2 DOMAIN-CONTAINING PROTEIN"/>
    <property type="match status" value="1"/>
</dbReference>
<dbReference type="Pfam" id="PF24147">
    <property type="entry name" value="C2_SHIP1-2_2nd"/>
    <property type="match status" value="1"/>
</dbReference>
<dbReference type="Pfam" id="PF24150">
    <property type="entry name" value="C2_SHIP1-2_first"/>
    <property type="match status" value="1"/>
</dbReference>
<dbReference type="Pfam" id="PF22669">
    <property type="entry name" value="Exo_endo_phos2"/>
    <property type="match status" value="1"/>
</dbReference>
<dbReference type="Pfam" id="PF00017">
    <property type="entry name" value="SH2"/>
    <property type="match status" value="1"/>
</dbReference>
<dbReference type="PRINTS" id="PR00401">
    <property type="entry name" value="SH2DOMAIN"/>
</dbReference>
<dbReference type="SMART" id="SM00128">
    <property type="entry name" value="IPPc"/>
    <property type="match status" value="1"/>
</dbReference>
<dbReference type="SMART" id="SM00252">
    <property type="entry name" value="SH2"/>
    <property type="match status" value="1"/>
</dbReference>
<dbReference type="SUPFAM" id="SSF56219">
    <property type="entry name" value="DNase I-like"/>
    <property type="match status" value="1"/>
</dbReference>
<dbReference type="SUPFAM" id="SSF55550">
    <property type="entry name" value="SH2 domain"/>
    <property type="match status" value="1"/>
</dbReference>
<dbReference type="PROSITE" id="PS50001">
    <property type="entry name" value="SH2"/>
    <property type="match status" value="1"/>
</dbReference>
<protein>
    <recommendedName>
        <fullName evidence="57">Phosphatidylinositol 3,4,5-trisphosphate 5-phosphatase 1</fullName>
        <ecNumber evidence="33 34 41">3.1.3.86</ecNumber>
    </recommendedName>
    <alternativeName>
        <fullName>Inositol polyphosphate-5-phosphatase D</fullName>
        <ecNumber evidence="2">3.1.3.56</ecNumber>
    </alternativeName>
    <alternativeName>
        <fullName evidence="55">Inositol polyphosphate-5-phosphatase of 145 kDa</fullName>
        <shortName evidence="55">SIP-145</shortName>
    </alternativeName>
    <alternativeName>
        <fullName>Phosphatidylinositol-4,5-bisphosphate 5-phosphatase</fullName>
        <ecNumber evidence="42">3.1.3.36</ecNumber>
    </alternativeName>
    <alternativeName>
        <fullName>SH2 domain-containing inositol 5'-phosphatase 1</fullName>
        <shortName>SH2 domain-containing inositol phosphatase 1</shortName>
        <shortName>SHIP-1</shortName>
    </alternativeName>
    <alternativeName>
        <fullName evidence="56">p150Ship</fullName>
    </alternativeName>
</protein>